<name>ATPE_RICPR</name>
<protein>
    <recommendedName>
        <fullName>ATP synthase epsilon chain</fullName>
    </recommendedName>
    <alternativeName>
        <fullName>ATP synthase F1 sector epsilon subunit</fullName>
    </alternativeName>
    <alternativeName>
        <fullName>F-ATPase epsilon subunit</fullName>
    </alternativeName>
</protein>
<accession>Q9ZCF3</accession>
<reference key="1">
    <citation type="journal article" date="1998" name="Nature">
        <title>The genome sequence of Rickettsia prowazekii and the origin of mitochondria.</title>
        <authorList>
            <person name="Andersson S.G.E."/>
            <person name="Zomorodipour A."/>
            <person name="Andersson J.O."/>
            <person name="Sicheritz-Ponten T."/>
            <person name="Alsmark U.C.M."/>
            <person name="Podowski R.M."/>
            <person name="Naeslund A.K."/>
            <person name="Eriksson A.-S."/>
            <person name="Winkler H.H."/>
            <person name="Kurland C.G."/>
        </authorList>
    </citation>
    <scope>NUCLEOTIDE SEQUENCE [LARGE SCALE GENOMIC DNA]</scope>
    <source>
        <strain>Madrid E</strain>
    </source>
</reference>
<sequence>MHETIRVKIITPSSIAFEKQSKMVTMPGEDGMFGVLPHHVPMIVNLKAGLVQIYIYNIHNYENTYLISGGVTEITSHYINIVTEVAINVTNLSESEISTQRYELQKLLSHQH</sequence>
<keyword id="KW-0066">ATP synthesis</keyword>
<keyword id="KW-0997">Cell inner membrane</keyword>
<keyword id="KW-1003">Cell membrane</keyword>
<keyword id="KW-0139">CF(1)</keyword>
<keyword id="KW-0375">Hydrogen ion transport</keyword>
<keyword id="KW-0406">Ion transport</keyword>
<keyword id="KW-0472">Membrane</keyword>
<keyword id="KW-1185">Reference proteome</keyword>
<keyword id="KW-0813">Transport</keyword>
<organism>
    <name type="scientific">Rickettsia prowazekii (strain Madrid E)</name>
    <dbReference type="NCBI Taxonomy" id="272947"/>
    <lineage>
        <taxon>Bacteria</taxon>
        <taxon>Pseudomonadati</taxon>
        <taxon>Pseudomonadota</taxon>
        <taxon>Alphaproteobacteria</taxon>
        <taxon>Rickettsiales</taxon>
        <taxon>Rickettsiaceae</taxon>
        <taxon>Rickettsieae</taxon>
        <taxon>Rickettsia</taxon>
        <taxon>typhus group</taxon>
    </lineage>
</organism>
<dbReference type="EMBL" id="AJ235273">
    <property type="protein sequence ID" value="CAA15226.1"/>
    <property type="molecule type" value="Genomic_DNA"/>
</dbReference>
<dbReference type="PIR" id="B71641">
    <property type="entry name" value="B71641"/>
</dbReference>
<dbReference type="RefSeq" id="NP_221150.1">
    <property type="nucleotide sequence ID" value="NC_000963.1"/>
</dbReference>
<dbReference type="RefSeq" id="WP_004596905.1">
    <property type="nucleotide sequence ID" value="NC_000963.1"/>
</dbReference>
<dbReference type="SMR" id="Q9ZCF3"/>
<dbReference type="STRING" id="272947.gene:17555869"/>
<dbReference type="EnsemblBacteria" id="CAA15226">
    <property type="protein sequence ID" value="CAA15226"/>
    <property type="gene ID" value="CAA15226"/>
</dbReference>
<dbReference type="KEGG" id="rpr:RP800"/>
<dbReference type="PATRIC" id="fig|272947.5.peg.836"/>
<dbReference type="eggNOG" id="COG0355">
    <property type="taxonomic scope" value="Bacteria"/>
</dbReference>
<dbReference type="HOGENOM" id="CLU_084338_2_1_5"/>
<dbReference type="OrthoDB" id="9799969at2"/>
<dbReference type="Proteomes" id="UP000002480">
    <property type="component" value="Chromosome"/>
</dbReference>
<dbReference type="GO" id="GO:0005886">
    <property type="term" value="C:plasma membrane"/>
    <property type="evidence" value="ECO:0007669"/>
    <property type="project" value="UniProtKB-SubCell"/>
</dbReference>
<dbReference type="GO" id="GO:0045259">
    <property type="term" value="C:proton-transporting ATP synthase complex"/>
    <property type="evidence" value="ECO:0007669"/>
    <property type="project" value="UniProtKB-KW"/>
</dbReference>
<dbReference type="GO" id="GO:0005524">
    <property type="term" value="F:ATP binding"/>
    <property type="evidence" value="ECO:0007669"/>
    <property type="project" value="UniProtKB-UniRule"/>
</dbReference>
<dbReference type="GO" id="GO:0046933">
    <property type="term" value="F:proton-transporting ATP synthase activity, rotational mechanism"/>
    <property type="evidence" value="ECO:0007669"/>
    <property type="project" value="UniProtKB-UniRule"/>
</dbReference>
<dbReference type="CDD" id="cd12152">
    <property type="entry name" value="F1-ATPase_delta"/>
    <property type="match status" value="1"/>
</dbReference>
<dbReference type="Gene3D" id="2.60.15.10">
    <property type="entry name" value="F0F1 ATP synthase delta/epsilon subunit, N-terminal"/>
    <property type="match status" value="1"/>
</dbReference>
<dbReference type="HAMAP" id="MF_00530">
    <property type="entry name" value="ATP_synth_epsil_bac"/>
    <property type="match status" value="1"/>
</dbReference>
<dbReference type="InterPro" id="IPR001469">
    <property type="entry name" value="ATP_synth_F1_dsu/esu"/>
</dbReference>
<dbReference type="InterPro" id="IPR020546">
    <property type="entry name" value="ATP_synth_F1_dsu/esu_N"/>
</dbReference>
<dbReference type="InterPro" id="IPR036771">
    <property type="entry name" value="ATPsynth_dsu/esu_N"/>
</dbReference>
<dbReference type="NCBIfam" id="TIGR01216">
    <property type="entry name" value="ATP_synt_epsi"/>
    <property type="match status" value="1"/>
</dbReference>
<dbReference type="NCBIfam" id="NF002403">
    <property type="entry name" value="PRK01474.1"/>
    <property type="match status" value="1"/>
</dbReference>
<dbReference type="PANTHER" id="PTHR13822">
    <property type="entry name" value="ATP SYNTHASE DELTA/EPSILON CHAIN"/>
    <property type="match status" value="1"/>
</dbReference>
<dbReference type="PANTHER" id="PTHR13822:SF10">
    <property type="entry name" value="ATP SYNTHASE EPSILON CHAIN, CHLOROPLASTIC"/>
    <property type="match status" value="1"/>
</dbReference>
<dbReference type="Pfam" id="PF02823">
    <property type="entry name" value="ATP-synt_DE_N"/>
    <property type="match status" value="1"/>
</dbReference>
<dbReference type="SUPFAM" id="SSF51344">
    <property type="entry name" value="Epsilon subunit of F1F0-ATP synthase N-terminal domain"/>
    <property type="match status" value="1"/>
</dbReference>
<proteinExistence type="inferred from homology"/>
<evidence type="ECO:0000250" key="1"/>
<evidence type="ECO:0000305" key="2"/>
<feature type="chain" id="PRO_0000188193" description="ATP synthase epsilon chain">
    <location>
        <begin position="1"/>
        <end position="112"/>
    </location>
</feature>
<gene>
    <name type="primary">atpC</name>
    <name type="ordered locus">RP800</name>
</gene>
<comment type="function">
    <text evidence="1">Produces ATP from ADP in the presence of a proton gradient across the membrane.</text>
</comment>
<comment type="subunit">
    <text>F-type ATPases have 2 components, CF(1) - the catalytic core - and CF(0) - the membrane proton channel. CF(1) has five subunits: alpha(3), beta(3), gamma(1), delta(1), epsilon(1). CF(0) has three main subunits: a, b and c.</text>
</comment>
<comment type="subcellular location">
    <subcellularLocation>
        <location evidence="1">Cell inner membrane</location>
        <topology evidence="1">Peripheral membrane protein</topology>
    </subcellularLocation>
</comment>
<comment type="similarity">
    <text evidence="2">Belongs to the ATPase epsilon chain family.</text>
</comment>